<protein>
    <recommendedName>
        <fullName evidence="1">Putative pterin-4-alpha-carbinolamine dehydratase</fullName>
        <shortName evidence="1">PHS</shortName>
        <ecNumber evidence="1">4.2.1.96</ecNumber>
    </recommendedName>
    <alternativeName>
        <fullName evidence="1">4-alpha-hydroxy-tetrahydropterin dehydratase</fullName>
    </alternativeName>
    <alternativeName>
        <fullName evidence="1">Pterin carbinolamine dehydratase</fullName>
        <shortName evidence="1">PCD</shortName>
    </alternativeName>
</protein>
<comment type="catalytic activity">
    <reaction evidence="1">
        <text>(4aS,6R)-4a-hydroxy-L-erythro-5,6,7,8-tetrahydrobiopterin = (6R)-L-erythro-6,7-dihydrobiopterin + H2O</text>
        <dbReference type="Rhea" id="RHEA:11920"/>
        <dbReference type="ChEBI" id="CHEBI:15377"/>
        <dbReference type="ChEBI" id="CHEBI:15642"/>
        <dbReference type="ChEBI" id="CHEBI:43120"/>
        <dbReference type="EC" id="4.2.1.96"/>
    </reaction>
</comment>
<comment type="similarity">
    <text evidence="1">Belongs to the pterin-4-alpha-carbinolamine dehydratase family.</text>
</comment>
<keyword id="KW-0456">Lyase</keyword>
<gene>
    <name type="ordered locus">Sputw3181_2714</name>
</gene>
<name>PHS_SHESW</name>
<feature type="chain" id="PRO_1000050462" description="Putative pterin-4-alpha-carbinolamine dehydratase">
    <location>
        <begin position="1"/>
        <end position="112"/>
    </location>
</feature>
<sequence>MTVLSDMKCEACQADAPKVTDEELAELVRMIPDWSVQVRDGIMQLERVYKFKNFKLAMAFTNKLAELAEEEFHHPGIFTEWGKVTVTWWSHSIKGLHRNDFIMAAKTDQLLG</sequence>
<dbReference type="EC" id="4.2.1.96" evidence="1"/>
<dbReference type="EMBL" id="CP000503">
    <property type="protein sequence ID" value="ABM25533.1"/>
    <property type="molecule type" value="Genomic_DNA"/>
</dbReference>
<dbReference type="RefSeq" id="WP_011789989.1">
    <property type="nucleotide sequence ID" value="NC_008750.1"/>
</dbReference>
<dbReference type="SMR" id="A1RLI8"/>
<dbReference type="KEGG" id="shw:Sputw3181_2714"/>
<dbReference type="HOGENOM" id="CLU_081974_2_2_6"/>
<dbReference type="Proteomes" id="UP000002597">
    <property type="component" value="Chromosome"/>
</dbReference>
<dbReference type="GO" id="GO:0008124">
    <property type="term" value="F:4-alpha-hydroxytetrahydrobiopterin dehydratase activity"/>
    <property type="evidence" value="ECO:0007669"/>
    <property type="project" value="UniProtKB-UniRule"/>
</dbReference>
<dbReference type="GO" id="GO:0006729">
    <property type="term" value="P:tetrahydrobiopterin biosynthetic process"/>
    <property type="evidence" value="ECO:0007669"/>
    <property type="project" value="InterPro"/>
</dbReference>
<dbReference type="CDD" id="cd00913">
    <property type="entry name" value="PCD_DCoH_subfamily_a"/>
    <property type="match status" value="1"/>
</dbReference>
<dbReference type="Gene3D" id="3.30.1360.20">
    <property type="entry name" value="Transcriptional coactivator/pterin dehydratase"/>
    <property type="match status" value="1"/>
</dbReference>
<dbReference type="HAMAP" id="MF_00434">
    <property type="entry name" value="Pterin_4_alpha"/>
    <property type="match status" value="1"/>
</dbReference>
<dbReference type="InterPro" id="IPR036428">
    <property type="entry name" value="PCD_sf"/>
</dbReference>
<dbReference type="InterPro" id="IPR050376">
    <property type="entry name" value="Pterin-4-alpha-carb_dehyd"/>
</dbReference>
<dbReference type="InterPro" id="IPR001533">
    <property type="entry name" value="Pterin_deHydtase"/>
</dbReference>
<dbReference type="NCBIfam" id="NF002016">
    <property type="entry name" value="PRK00823.1-1"/>
    <property type="match status" value="1"/>
</dbReference>
<dbReference type="PANTHER" id="PTHR42805">
    <property type="entry name" value="PTERIN-4-ALPHA-CARBINOLAMINE DEHYDRATASE-RELATED"/>
    <property type="match status" value="1"/>
</dbReference>
<dbReference type="PANTHER" id="PTHR42805:SF1">
    <property type="entry name" value="PTERIN-4-ALPHA-CARBINOLAMINE DEHYDRATASE-RELATED"/>
    <property type="match status" value="1"/>
</dbReference>
<dbReference type="Pfam" id="PF01329">
    <property type="entry name" value="Pterin_4a"/>
    <property type="match status" value="1"/>
</dbReference>
<dbReference type="SUPFAM" id="SSF55248">
    <property type="entry name" value="PCD-like"/>
    <property type="match status" value="1"/>
</dbReference>
<evidence type="ECO:0000255" key="1">
    <source>
        <dbReference type="HAMAP-Rule" id="MF_00434"/>
    </source>
</evidence>
<organism>
    <name type="scientific">Shewanella sp. (strain W3-18-1)</name>
    <dbReference type="NCBI Taxonomy" id="351745"/>
    <lineage>
        <taxon>Bacteria</taxon>
        <taxon>Pseudomonadati</taxon>
        <taxon>Pseudomonadota</taxon>
        <taxon>Gammaproteobacteria</taxon>
        <taxon>Alteromonadales</taxon>
        <taxon>Shewanellaceae</taxon>
        <taxon>Shewanella</taxon>
    </lineage>
</organism>
<accession>A1RLI8</accession>
<proteinExistence type="inferred from homology"/>
<reference key="1">
    <citation type="submission" date="2006-12" db="EMBL/GenBank/DDBJ databases">
        <title>Complete sequence of Shewanella sp. W3-18-1.</title>
        <authorList>
            <consortium name="US DOE Joint Genome Institute"/>
            <person name="Copeland A."/>
            <person name="Lucas S."/>
            <person name="Lapidus A."/>
            <person name="Barry K."/>
            <person name="Detter J.C."/>
            <person name="Glavina del Rio T."/>
            <person name="Hammon N."/>
            <person name="Israni S."/>
            <person name="Dalin E."/>
            <person name="Tice H."/>
            <person name="Pitluck S."/>
            <person name="Chain P."/>
            <person name="Malfatti S."/>
            <person name="Shin M."/>
            <person name="Vergez L."/>
            <person name="Schmutz J."/>
            <person name="Larimer F."/>
            <person name="Land M."/>
            <person name="Hauser L."/>
            <person name="Kyrpides N."/>
            <person name="Lykidis A."/>
            <person name="Tiedje J."/>
            <person name="Richardson P."/>
        </authorList>
    </citation>
    <scope>NUCLEOTIDE SEQUENCE [LARGE SCALE GENOMIC DNA]</scope>
    <source>
        <strain>W3-18-1</strain>
    </source>
</reference>